<reference key="1">
    <citation type="submission" date="2009-02" db="EMBL/GenBank/DDBJ databases">
        <title>Genome sequence of Bacillus cereus 03BB102.</title>
        <authorList>
            <person name="Dodson R.J."/>
            <person name="Jackson P."/>
            <person name="Munk A.C."/>
            <person name="Brettin T."/>
            <person name="Bruce D."/>
            <person name="Detter C."/>
            <person name="Tapia R."/>
            <person name="Han C."/>
            <person name="Sutton G."/>
            <person name="Sims D."/>
        </authorList>
    </citation>
    <scope>NUCLEOTIDE SEQUENCE [LARGE SCALE GENOMIC DNA]</scope>
    <source>
        <strain>03BB102</strain>
    </source>
</reference>
<name>RECF_BACC3</name>
<dbReference type="EMBL" id="CP001407">
    <property type="protein sequence ID" value="ACO31087.1"/>
    <property type="molecule type" value="Genomic_DNA"/>
</dbReference>
<dbReference type="RefSeq" id="WP_000470750.1">
    <property type="nucleotide sequence ID" value="NZ_CP009318.1"/>
</dbReference>
<dbReference type="SMR" id="C1ES11"/>
<dbReference type="GeneID" id="93011073"/>
<dbReference type="KEGG" id="bcx:BCA_0004"/>
<dbReference type="PATRIC" id="fig|572264.18.peg.69"/>
<dbReference type="Proteomes" id="UP000002210">
    <property type="component" value="Chromosome"/>
</dbReference>
<dbReference type="GO" id="GO:0005737">
    <property type="term" value="C:cytoplasm"/>
    <property type="evidence" value="ECO:0007669"/>
    <property type="project" value="UniProtKB-SubCell"/>
</dbReference>
<dbReference type="GO" id="GO:0005524">
    <property type="term" value="F:ATP binding"/>
    <property type="evidence" value="ECO:0007669"/>
    <property type="project" value="UniProtKB-UniRule"/>
</dbReference>
<dbReference type="GO" id="GO:0003697">
    <property type="term" value="F:single-stranded DNA binding"/>
    <property type="evidence" value="ECO:0007669"/>
    <property type="project" value="UniProtKB-UniRule"/>
</dbReference>
<dbReference type="GO" id="GO:0006260">
    <property type="term" value="P:DNA replication"/>
    <property type="evidence" value="ECO:0007669"/>
    <property type="project" value="UniProtKB-UniRule"/>
</dbReference>
<dbReference type="GO" id="GO:0000731">
    <property type="term" value="P:DNA synthesis involved in DNA repair"/>
    <property type="evidence" value="ECO:0007669"/>
    <property type="project" value="TreeGrafter"/>
</dbReference>
<dbReference type="GO" id="GO:0006302">
    <property type="term" value="P:double-strand break repair"/>
    <property type="evidence" value="ECO:0007669"/>
    <property type="project" value="TreeGrafter"/>
</dbReference>
<dbReference type="GO" id="GO:0009432">
    <property type="term" value="P:SOS response"/>
    <property type="evidence" value="ECO:0007669"/>
    <property type="project" value="UniProtKB-UniRule"/>
</dbReference>
<dbReference type="CDD" id="cd03242">
    <property type="entry name" value="ABC_RecF"/>
    <property type="match status" value="1"/>
</dbReference>
<dbReference type="FunFam" id="1.20.1050.90:FF:000002">
    <property type="entry name" value="DNA replication and repair protein RecF"/>
    <property type="match status" value="1"/>
</dbReference>
<dbReference type="FunFam" id="3.40.50.300:FF:000400">
    <property type="entry name" value="DNA replication and repair protein RecF"/>
    <property type="match status" value="1"/>
</dbReference>
<dbReference type="Gene3D" id="3.40.50.300">
    <property type="entry name" value="P-loop containing nucleotide triphosphate hydrolases"/>
    <property type="match status" value="1"/>
</dbReference>
<dbReference type="Gene3D" id="1.20.1050.90">
    <property type="entry name" value="RecF/RecN/SMC, N-terminal domain"/>
    <property type="match status" value="1"/>
</dbReference>
<dbReference type="HAMAP" id="MF_00365">
    <property type="entry name" value="RecF"/>
    <property type="match status" value="1"/>
</dbReference>
<dbReference type="InterPro" id="IPR001238">
    <property type="entry name" value="DNA-binding_RecF"/>
</dbReference>
<dbReference type="InterPro" id="IPR018078">
    <property type="entry name" value="DNA-binding_RecF_CS"/>
</dbReference>
<dbReference type="InterPro" id="IPR027417">
    <property type="entry name" value="P-loop_NTPase"/>
</dbReference>
<dbReference type="InterPro" id="IPR003395">
    <property type="entry name" value="RecF/RecN/SMC_N"/>
</dbReference>
<dbReference type="InterPro" id="IPR042174">
    <property type="entry name" value="RecF_2"/>
</dbReference>
<dbReference type="NCBIfam" id="TIGR00611">
    <property type="entry name" value="recf"/>
    <property type="match status" value="1"/>
</dbReference>
<dbReference type="PANTHER" id="PTHR32182">
    <property type="entry name" value="DNA REPLICATION AND REPAIR PROTEIN RECF"/>
    <property type="match status" value="1"/>
</dbReference>
<dbReference type="PANTHER" id="PTHR32182:SF0">
    <property type="entry name" value="DNA REPLICATION AND REPAIR PROTEIN RECF"/>
    <property type="match status" value="1"/>
</dbReference>
<dbReference type="Pfam" id="PF02463">
    <property type="entry name" value="SMC_N"/>
    <property type="match status" value="1"/>
</dbReference>
<dbReference type="SUPFAM" id="SSF52540">
    <property type="entry name" value="P-loop containing nucleoside triphosphate hydrolases"/>
    <property type="match status" value="1"/>
</dbReference>
<dbReference type="PROSITE" id="PS00617">
    <property type="entry name" value="RECF_1"/>
    <property type="match status" value="1"/>
</dbReference>
<dbReference type="PROSITE" id="PS00618">
    <property type="entry name" value="RECF_2"/>
    <property type="match status" value="1"/>
</dbReference>
<organism>
    <name type="scientific">Bacillus cereus (strain 03BB102)</name>
    <dbReference type="NCBI Taxonomy" id="572264"/>
    <lineage>
        <taxon>Bacteria</taxon>
        <taxon>Bacillati</taxon>
        <taxon>Bacillota</taxon>
        <taxon>Bacilli</taxon>
        <taxon>Bacillales</taxon>
        <taxon>Bacillaceae</taxon>
        <taxon>Bacillus</taxon>
        <taxon>Bacillus cereus group</taxon>
    </lineage>
</organism>
<keyword id="KW-0067">ATP-binding</keyword>
<keyword id="KW-0963">Cytoplasm</keyword>
<keyword id="KW-0227">DNA damage</keyword>
<keyword id="KW-0234">DNA repair</keyword>
<keyword id="KW-0235">DNA replication</keyword>
<keyword id="KW-0238">DNA-binding</keyword>
<keyword id="KW-0547">Nucleotide-binding</keyword>
<keyword id="KW-0742">SOS response</keyword>
<accession>C1ES11</accession>
<proteinExistence type="inferred from homology"/>
<sequence>MFISEIQLKNYRNYEKLELSFEDKVNVIIGENAQGKTNLMEAIYVLAMAKSHRTSNDRELIRWDEDFGQIKGKLQKRNSSLSLELNISKKGKKAKLNQLEQQKLSQYIGVMNVVMFAPEDLNLVKGSPQVRRRFLDMELGQIAPVYLYELSQYQKVLTQRNHLLKKMQGNSKNEETMLDVFTLQLIEHGTKILQKRFEFLHLLQEWAAPIHRGISRGLEELEIVYKPSVDVSESMDLSKIKEVYYESFQSVKQREIFRGTTLIGPHRDDLQFFVNSKNVQVFGSQGQQRTTALSLKLAEIELIYSEVKEYPILLLDDVLSELDDYRQSHLLNTIQGKVQTFVTTTSVDGIEHETLKEAKTIHVTNGTVDCEIDRA</sequence>
<feature type="chain" id="PRO_1000133673" description="DNA replication and repair protein RecF">
    <location>
        <begin position="1"/>
        <end position="375"/>
    </location>
</feature>
<feature type="binding site" evidence="1">
    <location>
        <begin position="30"/>
        <end position="37"/>
    </location>
    <ligand>
        <name>ATP</name>
        <dbReference type="ChEBI" id="CHEBI:30616"/>
    </ligand>
</feature>
<evidence type="ECO:0000255" key="1">
    <source>
        <dbReference type="HAMAP-Rule" id="MF_00365"/>
    </source>
</evidence>
<comment type="function">
    <text evidence="1">The RecF protein is involved in DNA metabolism; it is required for DNA replication and normal SOS inducibility. RecF binds preferentially to single-stranded, linear DNA. It also seems to bind ATP.</text>
</comment>
<comment type="subcellular location">
    <subcellularLocation>
        <location evidence="1">Cytoplasm</location>
    </subcellularLocation>
</comment>
<comment type="similarity">
    <text evidence="1">Belongs to the RecF family.</text>
</comment>
<protein>
    <recommendedName>
        <fullName evidence="1">DNA replication and repair protein RecF</fullName>
    </recommendedName>
</protein>
<gene>
    <name evidence="1" type="primary">recF</name>
    <name type="ordered locus">BCA_0004</name>
</gene>